<gene>
    <name type="primary">y12L</name>
    <name type="synonym">30.7</name>
</gene>
<reference key="1">
    <citation type="journal article" date="1992" name="DNA Seq.">
        <title>The nucleotide sequence between genes 31 and 30 of bacteriophage T4.</title>
        <authorList>
            <person name="Nivinskas R."/>
            <person name="Zajanckauskaite A."/>
            <person name="Raudonikiene A."/>
            <person name="Viteniene I."/>
        </authorList>
    </citation>
    <scope>NUCLEOTIDE SEQUENCE [GENOMIC DNA]</scope>
</reference>
<reference key="2">
    <citation type="journal article" date="2003" name="Microbiol. Mol. Biol. Rev.">
        <title>Bacteriophage T4 genome.</title>
        <authorList>
            <person name="Miller E.S."/>
            <person name="Kutter E."/>
            <person name="Mosig G."/>
            <person name="Arisaka F."/>
            <person name="Kunisawa T."/>
            <person name="Ruger W."/>
        </authorList>
    </citation>
    <scope>NUCLEOTIDE SEQUENCE [LARGE SCALE GENOMIC DNA]</scope>
</reference>
<sequence length="121" mass="14130">MNYINFERKYVSNGIAGSIDTICLWKHQNGSVCEIEQYMTPNYVYMRFENGITVSITMKGSNFKIALDDDFRQRDLGTHPCWNGANRKLLVKTWIRHILSNRAKPEHLEAIFDVVLNEFDI</sequence>
<dbReference type="EMBL" id="X60109">
    <property type="protein sequence ID" value="CAA42703.1"/>
    <property type="molecule type" value="Genomic_DNA"/>
</dbReference>
<dbReference type="EMBL" id="AF158101">
    <property type="protein sequence ID" value="AAD42448.1"/>
    <property type="molecule type" value="Genomic_DNA"/>
</dbReference>
<dbReference type="PIR" id="S27145">
    <property type="entry name" value="S27145"/>
</dbReference>
<dbReference type="RefSeq" id="NP_049821.1">
    <property type="nucleotide sequence ID" value="NC_000866.4"/>
</dbReference>
<dbReference type="GeneID" id="1258645"/>
<dbReference type="KEGG" id="vg:1258645"/>
<dbReference type="OrthoDB" id="13549at10239"/>
<dbReference type="Proteomes" id="UP000009087">
    <property type="component" value="Segment"/>
</dbReference>
<dbReference type="InterPro" id="IPR009690">
    <property type="entry name" value="Phage_T4_Gp30_7"/>
</dbReference>
<dbReference type="Pfam" id="PF06919">
    <property type="entry name" value="Phage_T4_Gp30_7"/>
    <property type="match status" value="1"/>
</dbReference>
<keyword id="KW-1185">Reference proteome</keyword>
<accession>Q02408</accession>
<protein>
    <recommendedName>
        <fullName>Uncharacterized 14.1 kDa protein in Gp30-rIII intergenic region</fullName>
    </recommendedName>
</protein>
<organism>
    <name type="scientific">Enterobacteria phage T4</name>
    <name type="common">Bacteriophage T4</name>
    <dbReference type="NCBI Taxonomy" id="10665"/>
    <lineage>
        <taxon>Viruses</taxon>
        <taxon>Duplodnaviria</taxon>
        <taxon>Heunggongvirae</taxon>
        <taxon>Uroviricota</taxon>
        <taxon>Caudoviricetes</taxon>
        <taxon>Straboviridae</taxon>
        <taxon>Tevenvirinae</taxon>
        <taxon>Tequatrovirus</taxon>
    </lineage>
</organism>
<name>Y12L_BPT4</name>
<proteinExistence type="predicted"/>
<feature type="chain" id="PRO_0000165172" description="Uncharacterized 14.1 kDa protein in Gp30-rIII intergenic region">
    <location>
        <begin position="1"/>
        <end position="121"/>
    </location>
</feature>
<organismHost>
    <name type="scientific">Escherichia coli</name>
    <dbReference type="NCBI Taxonomy" id="562"/>
</organismHost>